<dbReference type="EC" id="1.7.1.7" evidence="1"/>
<dbReference type="EMBL" id="CP000026">
    <property type="protein sequence ID" value="AAV76178.1"/>
    <property type="molecule type" value="Genomic_DNA"/>
</dbReference>
<dbReference type="RefSeq" id="WP_001217365.1">
    <property type="nucleotide sequence ID" value="NC_006511.1"/>
</dbReference>
<dbReference type="SMR" id="Q5PDH8"/>
<dbReference type="KEGG" id="spt:SPA0145"/>
<dbReference type="HOGENOM" id="CLU_022552_5_3_6"/>
<dbReference type="Proteomes" id="UP000008185">
    <property type="component" value="Chromosome"/>
</dbReference>
<dbReference type="GO" id="GO:0005829">
    <property type="term" value="C:cytosol"/>
    <property type="evidence" value="ECO:0007669"/>
    <property type="project" value="TreeGrafter"/>
</dbReference>
<dbReference type="GO" id="GO:1902560">
    <property type="term" value="C:GMP reductase complex"/>
    <property type="evidence" value="ECO:0007669"/>
    <property type="project" value="InterPro"/>
</dbReference>
<dbReference type="GO" id="GO:0003920">
    <property type="term" value="F:GMP reductase activity"/>
    <property type="evidence" value="ECO:0007669"/>
    <property type="project" value="UniProtKB-UniRule"/>
</dbReference>
<dbReference type="GO" id="GO:0046872">
    <property type="term" value="F:metal ion binding"/>
    <property type="evidence" value="ECO:0007669"/>
    <property type="project" value="UniProtKB-KW"/>
</dbReference>
<dbReference type="GO" id="GO:0006163">
    <property type="term" value="P:purine nucleotide metabolic process"/>
    <property type="evidence" value="ECO:0007669"/>
    <property type="project" value="UniProtKB-UniRule"/>
</dbReference>
<dbReference type="CDD" id="cd00381">
    <property type="entry name" value="IMPDH"/>
    <property type="match status" value="1"/>
</dbReference>
<dbReference type="FunFam" id="3.20.20.70:FF:000012">
    <property type="entry name" value="GMP reductase"/>
    <property type="match status" value="1"/>
</dbReference>
<dbReference type="Gene3D" id="3.20.20.70">
    <property type="entry name" value="Aldolase class I"/>
    <property type="match status" value="1"/>
</dbReference>
<dbReference type="HAMAP" id="MF_00596">
    <property type="entry name" value="GMP_reduct_type1"/>
    <property type="match status" value="1"/>
</dbReference>
<dbReference type="InterPro" id="IPR013785">
    <property type="entry name" value="Aldolase_TIM"/>
</dbReference>
<dbReference type="InterPro" id="IPR050139">
    <property type="entry name" value="GMP_reductase"/>
</dbReference>
<dbReference type="InterPro" id="IPR005993">
    <property type="entry name" value="GMPR"/>
</dbReference>
<dbReference type="InterPro" id="IPR015875">
    <property type="entry name" value="IMP_DH/GMP_Rdtase_CS"/>
</dbReference>
<dbReference type="InterPro" id="IPR001093">
    <property type="entry name" value="IMP_DH_GMPRt"/>
</dbReference>
<dbReference type="NCBIfam" id="TIGR01305">
    <property type="entry name" value="GMP_reduct_1"/>
    <property type="match status" value="1"/>
</dbReference>
<dbReference type="NCBIfam" id="NF003470">
    <property type="entry name" value="PRK05096.1"/>
    <property type="match status" value="1"/>
</dbReference>
<dbReference type="PANTHER" id="PTHR43170">
    <property type="entry name" value="GMP REDUCTASE"/>
    <property type="match status" value="1"/>
</dbReference>
<dbReference type="PANTHER" id="PTHR43170:SF5">
    <property type="entry name" value="GMP REDUCTASE"/>
    <property type="match status" value="1"/>
</dbReference>
<dbReference type="Pfam" id="PF00478">
    <property type="entry name" value="IMPDH"/>
    <property type="match status" value="1"/>
</dbReference>
<dbReference type="PIRSF" id="PIRSF000235">
    <property type="entry name" value="GMP_reductase"/>
    <property type="match status" value="1"/>
</dbReference>
<dbReference type="SMART" id="SM01240">
    <property type="entry name" value="IMPDH"/>
    <property type="match status" value="1"/>
</dbReference>
<dbReference type="SUPFAM" id="SSF51412">
    <property type="entry name" value="Inosine monophosphate dehydrogenase (IMPDH)"/>
    <property type="match status" value="1"/>
</dbReference>
<dbReference type="PROSITE" id="PS00487">
    <property type="entry name" value="IMP_DH_GMP_RED"/>
    <property type="match status" value="1"/>
</dbReference>
<evidence type="ECO:0000255" key="1">
    <source>
        <dbReference type="HAMAP-Rule" id="MF_00596"/>
    </source>
</evidence>
<keyword id="KW-0479">Metal-binding</keyword>
<keyword id="KW-0521">NADP</keyword>
<keyword id="KW-0560">Oxidoreductase</keyword>
<keyword id="KW-0630">Potassium</keyword>
<reference key="1">
    <citation type="journal article" date="2004" name="Nat. Genet.">
        <title>Comparison of genome degradation in Paratyphi A and Typhi, human-restricted serovars of Salmonella enterica that cause typhoid.</title>
        <authorList>
            <person name="McClelland M."/>
            <person name="Sanderson K.E."/>
            <person name="Clifton S.W."/>
            <person name="Latreille P."/>
            <person name="Porwollik S."/>
            <person name="Sabo A."/>
            <person name="Meyer R."/>
            <person name="Bieri T."/>
            <person name="Ozersky P."/>
            <person name="McLellan M."/>
            <person name="Harkins C.R."/>
            <person name="Wang C."/>
            <person name="Nguyen C."/>
            <person name="Berghoff A."/>
            <person name="Elliott G."/>
            <person name="Kohlberg S."/>
            <person name="Strong C."/>
            <person name="Du F."/>
            <person name="Carter J."/>
            <person name="Kremizki C."/>
            <person name="Layman D."/>
            <person name="Leonard S."/>
            <person name="Sun H."/>
            <person name="Fulton L."/>
            <person name="Nash W."/>
            <person name="Miner T."/>
            <person name="Minx P."/>
            <person name="Delehaunty K."/>
            <person name="Fronick C."/>
            <person name="Magrini V."/>
            <person name="Nhan M."/>
            <person name="Warren W."/>
            <person name="Florea L."/>
            <person name="Spieth J."/>
            <person name="Wilson R.K."/>
        </authorList>
    </citation>
    <scope>NUCLEOTIDE SEQUENCE [LARGE SCALE GENOMIC DNA]</scope>
    <source>
        <strain>ATCC 9150 / SARB42</strain>
    </source>
</reference>
<feature type="chain" id="PRO_1000025617" description="GMP reductase">
    <location>
        <begin position="1"/>
        <end position="347"/>
    </location>
</feature>
<feature type="active site" description="Thioimidate intermediate" evidence="1">
    <location>
        <position position="186"/>
    </location>
</feature>
<feature type="binding site" evidence="1">
    <location>
        <begin position="108"/>
        <end position="131"/>
    </location>
    <ligand>
        <name>NADP(+)</name>
        <dbReference type="ChEBI" id="CHEBI:58349"/>
    </ligand>
</feature>
<feature type="binding site" evidence="1">
    <location>
        <position position="181"/>
    </location>
    <ligand>
        <name>K(+)</name>
        <dbReference type="ChEBI" id="CHEBI:29103"/>
    </ligand>
</feature>
<feature type="binding site" evidence="1">
    <location>
        <position position="183"/>
    </location>
    <ligand>
        <name>K(+)</name>
        <dbReference type="ChEBI" id="CHEBI:29103"/>
    </ligand>
</feature>
<feature type="binding site" evidence="1">
    <location>
        <begin position="216"/>
        <end position="239"/>
    </location>
    <ligand>
        <name>NADP(+)</name>
        <dbReference type="ChEBI" id="CHEBI:58349"/>
    </ligand>
</feature>
<name>GUAC_SALPA</name>
<comment type="function">
    <text evidence="1">Catalyzes the irreversible NADPH-dependent deamination of GMP to IMP. It functions in the conversion of nucleobase, nucleoside and nucleotide derivatives of G to A nucleotides, and in maintaining the intracellular balance of A and G nucleotides.</text>
</comment>
<comment type="catalytic activity">
    <reaction evidence="1">
        <text>IMP + NH4(+) + NADP(+) = GMP + NADPH + 2 H(+)</text>
        <dbReference type="Rhea" id="RHEA:17185"/>
        <dbReference type="ChEBI" id="CHEBI:15378"/>
        <dbReference type="ChEBI" id="CHEBI:28938"/>
        <dbReference type="ChEBI" id="CHEBI:57783"/>
        <dbReference type="ChEBI" id="CHEBI:58053"/>
        <dbReference type="ChEBI" id="CHEBI:58115"/>
        <dbReference type="ChEBI" id="CHEBI:58349"/>
        <dbReference type="EC" id="1.7.1.7"/>
    </reaction>
</comment>
<comment type="subunit">
    <text evidence="1">Homotetramer.</text>
</comment>
<comment type="similarity">
    <text evidence="1">Belongs to the IMPDH/GMPR family. GuaC type 1 subfamily.</text>
</comment>
<accession>Q5PDH8</accession>
<sequence>MRIEEDLKLGFKDVLIRPKRSTLKSRSDVELERQFTFKHSGQTWSGVPIIAANMDTVGTFEMAQALAGFDILTAVHKHYTVEEWAAFINTASADVLKHVMVSTGTSDADFEKTVQILALNPALNFVCIDVANGYSEHFVQFVAKAREAWPTKTICAGNVVTGEMCEELILSGADIVKVGIGPGSVCTTRVKTGVGYPQLSAVIECADAAHGLGGMIVSDGGCTMPGDVAKAFGGGADFVMLGGMLAGHEESGGSVVEENGEKFMLFYGMSSESAMNRHVGGVAKYRAAEGKTVKLPLRGPVGNTARDILGGLRSACTYVGASRLKELTKRTTFIRVQEQENRIFNSL</sequence>
<protein>
    <recommendedName>
        <fullName evidence="1">GMP reductase</fullName>
        <ecNumber evidence="1">1.7.1.7</ecNumber>
    </recommendedName>
    <alternativeName>
        <fullName evidence="1">Guanosine 5'-monophosphate oxidoreductase</fullName>
        <shortName evidence="1">Guanosine monophosphate reductase</shortName>
    </alternativeName>
</protein>
<organism>
    <name type="scientific">Salmonella paratyphi A (strain ATCC 9150 / SARB42)</name>
    <dbReference type="NCBI Taxonomy" id="295319"/>
    <lineage>
        <taxon>Bacteria</taxon>
        <taxon>Pseudomonadati</taxon>
        <taxon>Pseudomonadota</taxon>
        <taxon>Gammaproteobacteria</taxon>
        <taxon>Enterobacterales</taxon>
        <taxon>Enterobacteriaceae</taxon>
        <taxon>Salmonella</taxon>
    </lineage>
</organism>
<gene>
    <name evidence="1" type="primary">guaC</name>
    <name type="ordered locus">SPA0145</name>
</gene>
<proteinExistence type="inferred from homology"/>